<dbReference type="EC" id="5.4.99.-" evidence="4 5 9"/>
<dbReference type="EC" id="5.4.99.25" evidence="6"/>
<dbReference type="EMBL" id="AF448144">
    <property type="protein sequence ID" value="AAL40350.1"/>
    <property type="molecule type" value="mRNA"/>
</dbReference>
<dbReference type="EMBL" id="BX648709">
    <property type="protein sequence ID" value="CAH10560.1"/>
    <property type="molecule type" value="mRNA"/>
</dbReference>
<dbReference type="EMBL" id="AK312805">
    <property type="protein sequence ID" value="BAG35663.1"/>
    <property type="molecule type" value="mRNA"/>
</dbReference>
<dbReference type="EMBL" id="AK223567">
    <property type="protein sequence ID" value="BAD97287.1"/>
    <property type="molecule type" value="mRNA"/>
</dbReference>
<dbReference type="EMBL" id="AL355340">
    <property type="status" value="NOT_ANNOTATED_CDS"/>
    <property type="molecule type" value="Genomic_DNA"/>
</dbReference>
<dbReference type="EMBL" id="BC030601">
    <property type="protein sequence ID" value="AAH30601.1"/>
    <property type="molecule type" value="mRNA"/>
</dbReference>
<dbReference type="CCDS" id="CCDS7591.1"/>
<dbReference type="RefSeq" id="NP_631908.1">
    <property type="nucleotide sequence ID" value="NM_139169.5"/>
</dbReference>
<dbReference type="PDB" id="8JFX">
    <property type="method" value="X-ray"/>
    <property type="resolution" value="2.20 A"/>
    <property type="chains" value="A=58-318"/>
</dbReference>
<dbReference type="PDBsum" id="8JFX"/>
<dbReference type="SMR" id="Q8WWH5"/>
<dbReference type="BioGRID" id="126783">
    <property type="interactions" value="44"/>
</dbReference>
<dbReference type="FunCoup" id="Q8WWH5">
    <property type="interactions" value="1562"/>
</dbReference>
<dbReference type="IntAct" id="Q8WWH5">
    <property type="interactions" value="30"/>
</dbReference>
<dbReference type="MINT" id="Q8WWH5"/>
<dbReference type="STRING" id="9606.ENSP00000298746"/>
<dbReference type="GlyGen" id="Q8WWH5">
    <property type="glycosylation" value="6 sites, 1 O-linked glycan (4 sites)"/>
</dbReference>
<dbReference type="iPTMnet" id="Q8WWH5"/>
<dbReference type="PhosphoSitePlus" id="Q8WWH5"/>
<dbReference type="SwissPalm" id="Q8WWH5"/>
<dbReference type="BioMuta" id="TRUB1"/>
<dbReference type="DMDM" id="74751577"/>
<dbReference type="jPOST" id="Q8WWH5"/>
<dbReference type="MassIVE" id="Q8WWH5"/>
<dbReference type="PaxDb" id="9606-ENSP00000298746"/>
<dbReference type="PeptideAtlas" id="Q8WWH5"/>
<dbReference type="ProteomicsDB" id="74887"/>
<dbReference type="Pumba" id="Q8WWH5"/>
<dbReference type="TopDownProteomics" id="Q8WWH5"/>
<dbReference type="Antibodypedia" id="31974">
    <property type="antibodies" value="126 antibodies from 23 providers"/>
</dbReference>
<dbReference type="DNASU" id="142940"/>
<dbReference type="Ensembl" id="ENST00000298746.5">
    <property type="protein sequence ID" value="ENSP00000298746.3"/>
    <property type="gene ID" value="ENSG00000165832.6"/>
</dbReference>
<dbReference type="GeneID" id="142940"/>
<dbReference type="KEGG" id="hsa:142940"/>
<dbReference type="MANE-Select" id="ENST00000298746.5">
    <property type="protein sequence ID" value="ENSP00000298746.3"/>
    <property type="RefSeq nucleotide sequence ID" value="NM_139169.5"/>
    <property type="RefSeq protein sequence ID" value="NP_631908.1"/>
</dbReference>
<dbReference type="UCSC" id="uc001lcd.4">
    <property type="organism name" value="human"/>
</dbReference>
<dbReference type="AGR" id="HGNC:16060"/>
<dbReference type="CTD" id="142940"/>
<dbReference type="DisGeNET" id="142940"/>
<dbReference type="GeneCards" id="TRUB1"/>
<dbReference type="HGNC" id="HGNC:16060">
    <property type="gene designation" value="TRUB1"/>
</dbReference>
<dbReference type="HPA" id="ENSG00000165832">
    <property type="expression patterns" value="Low tissue specificity"/>
</dbReference>
<dbReference type="MIM" id="610726">
    <property type="type" value="gene"/>
</dbReference>
<dbReference type="neXtProt" id="NX_Q8WWH5"/>
<dbReference type="OpenTargets" id="ENSG00000165832"/>
<dbReference type="PharmGKB" id="PA38086"/>
<dbReference type="VEuPathDB" id="HostDB:ENSG00000165832"/>
<dbReference type="eggNOG" id="KOG2529">
    <property type="taxonomic scope" value="Eukaryota"/>
</dbReference>
<dbReference type="GeneTree" id="ENSGT00940000158962"/>
<dbReference type="HOGENOM" id="CLU_032087_1_0_1"/>
<dbReference type="InParanoid" id="Q8WWH5"/>
<dbReference type="OMA" id="VDKPSGF"/>
<dbReference type="OrthoDB" id="9995526at2759"/>
<dbReference type="PAN-GO" id="Q8WWH5">
    <property type="GO annotations" value="4 GO annotations based on evolutionary models"/>
</dbReference>
<dbReference type="PhylomeDB" id="Q8WWH5"/>
<dbReference type="TreeFam" id="TF320759"/>
<dbReference type="PathwayCommons" id="Q8WWH5"/>
<dbReference type="SignaLink" id="Q8WWH5"/>
<dbReference type="BioGRID-ORCS" id="142940">
    <property type="hits" value="11 hits in 1152 CRISPR screens"/>
</dbReference>
<dbReference type="ChiTaRS" id="TRUB1">
    <property type="organism name" value="human"/>
</dbReference>
<dbReference type="GenomeRNAi" id="142940"/>
<dbReference type="Pharos" id="Q8WWH5">
    <property type="development level" value="Tbio"/>
</dbReference>
<dbReference type="PRO" id="PR:Q8WWH5"/>
<dbReference type="Proteomes" id="UP000005640">
    <property type="component" value="Chromosome 10"/>
</dbReference>
<dbReference type="RNAct" id="Q8WWH5">
    <property type="molecule type" value="protein"/>
</dbReference>
<dbReference type="Bgee" id="ENSG00000165832">
    <property type="expression patterns" value="Expressed in adrenal tissue and 190 other cell types or tissues"/>
</dbReference>
<dbReference type="GO" id="GO:0005829">
    <property type="term" value="C:cytosol"/>
    <property type="evidence" value="ECO:0000314"/>
    <property type="project" value="UniProtKB"/>
</dbReference>
<dbReference type="GO" id="GO:0005739">
    <property type="term" value="C:mitochondrion"/>
    <property type="evidence" value="ECO:0006056"/>
    <property type="project" value="FlyBase"/>
</dbReference>
<dbReference type="GO" id="GO:0005634">
    <property type="term" value="C:nucleus"/>
    <property type="evidence" value="ECO:0000314"/>
    <property type="project" value="UniProtKB"/>
</dbReference>
<dbReference type="GO" id="GO:0070883">
    <property type="term" value="F:pre-miRNA binding"/>
    <property type="evidence" value="ECO:0000314"/>
    <property type="project" value="UniProtKB"/>
</dbReference>
<dbReference type="GO" id="GO:0009982">
    <property type="term" value="F:pseudouridine synthase activity"/>
    <property type="evidence" value="ECO:0000314"/>
    <property type="project" value="UniProtKB"/>
</dbReference>
<dbReference type="GO" id="GO:0160148">
    <property type="term" value="F:tRNA pseudouridine(55) synthase activity"/>
    <property type="evidence" value="ECO:0007669"/>
    <property type="project" value="RHEA"/>
</dbReference>
<dbReference type="GO" id="GO:0006397">
    <property type="term" value="P:mRNA processing"/>
    <property type="evidence" value="ECO:0007669"/>
    <property type="project" value="UniProtKB-KW"/>
</dbReference>
<dbReference type="GO" id="GO:1990481">
    <property type="term" value="P:mRNA pseudouridine synthesis"/>
    <property type="evidence" value="ECO:0000314"/>
    <property type="project" value="UniProtKB"/>
</dbReference>
<dbReference type="GO" id="GO:2000633">
    <property type="term" value="P:positive regulation of pre-miRNA processing"/>
    <property type="evidence" value="ECO:0000314"/>
    <property type="project" value="UniProtKB"/>
</dbReference>
<dbReference type="GO" id="GO:0006400">
    <property type="term" value="P:tRNA modification"/>
    <property type="evidence" value="ECO:0000314"/>
    <property type="project" value="UniProtKB"/>
</dbReference>
<dbReference type="CDD" id="cd02867">
    <property type="entry name" value="PseudoU_synth_TruB_4"/>
    <property type="match status" value="1"/>
</dbReference>
<dbReference type="FunFam" id="3.30.2350.10:FF:000013">
    <property type="entry name" value="TruB pseudouridine synthase family member 1"/>
    <property type="match status" value="1"/>
</dbReference>
<dbReference type="Gene3D" id="3.30.2350.10">
    <property type="entry name" value="Pseudouridine synthase"/>
    <property type="match status" value="1"/>
</dbReference>
<dbReference type="HAMAP" id="MF_01080">
    <property type="entry name" value="TruB_bact"/>
    <property type="match status" value="1"/>
</dbReference>
<dbReference type="InterPro" id="IPR020103">
    <property type="entry name" value="PsdUridine_synth_cat_dom_sf"/>
</dbReference>
<dbReference type="InterPro" id="IPR002501">
    <property type="entry name" value="PsdUridine_synth_N"/>
</dbReference>
<dbReference type="InterPro" id="IPR014780">
    <property type="entry name" value="tRNA_psdUridine_synth_TruB"/>
</dbReference>
<dbReference type="NCBIfam" id="TIGR00431">
    <property type="entry name" value="TruB"/>
    <property type="match status" value="1"/>
</dbReference>
<dbReference type="PANTHER" id="PTHR13767:SF2">
    <property type="entry name" value="PSEUDOURIDYLATE SYNTHASE TRUB1"/>
    <property type="match status" value="1"/>
</dbReference>
<dbReference type="PANTHER" id="PTHR13767">
    <property type="entry name" value="TRNA-PSEUDOURIDINE SYNTHASE"/>
    <property type="match status" value="1"/>
</dbReference>
<dbReference type="Pfam" id="PF01509">
    <property type="entry name" value="TruB_N"/>
    <property type="match status" value="1"/>
</dbReference>
<dbReference type="SUPFAM" id="SSF55120">
    <property type="entry name" value="Pseudouridine synthase"/>
    <property type="match status" value="1"/>
</dbReference>
<gene>
    <name evidence="7 11" type="primary">TRUB1</name>
    <name evidence="11" type="synonym">PUS4</name>
</gene>
<protein>
    <recommendedName>
        <fullName evidence="8">Pseudouridylate synthase TRUB1</fullName>
        <ecNumber evidence="4 5 9">5.4.99.-</ecNumber>
    </recommendedName>
    <alternativeName>
        <fullName evidence="7">TruB pseudouridine synthase homolog 1</fullName>
    </alternativeName>
    <alternativeName>
        <fullName evidence="8">tRNA pseudouridine 55 synthase TRUB1</fullName>
        <shortName evidence="8">Psi55 synthase TRUB1</shortName>
        <ecNumber evidence="6">5.4.99.25</ecNumber>
    </alternativeName>
</protein>
<comment type="function">
    <text evidence="3 4 5 6">Pseudouridine synthase that catalyzes pseudouridylation of mRNAs and tRNAs (PubMed:28073919, PubMed:31477916, PubMed:32926445). Mediates pseudouridylation of mRNAs with the consensus sequence 5'-GUUCNANNC-3', harboring a stem-loop structure (PubMed:28073919, PubMed:31477916). Constitutes the major pseudouridine synthase acting on mRNAs (PubMed:28073919). Also catalyzes pseudouridylation of some tRNAs, including synthesis of pseudouridine(55) from uracil-55, in the psi GC loop of a subset of tRNAs (PubMed:32926445, PubMed:33023933). Promotes the processing of pri-let-7 microRNAs (pri-miRNAs) independently of its RNA pseudouridylate synthase activity (PubMed:32926445). Acts by binding to the stem-loop structure on pri-let-7, preventing LIN28-binding (LIN28A and/or LIN28B), thereby enhancing the interaction between pri-let-7 and the microprocessor DGCR8, which mediates miRNA maturation (PubMed:32926445).</text>
</comment>
<comment type="catalytic activity">
    <reaction evidence="4 9">
        <text>a uridine in mRNA = a pseudouridine in mRNA</text>
        <dbReference type="Rhea" id="RHEA:56644"/>
        <dbReference type="Rhea" id="RHEA-COMP:14658"/>
        <dbReference type="Rhea" id="RHEA-COMP:14659"/>
        <dbReference type="ChEBI" id="CHEBI:65314"/>
        <dbReference type="ChEBI" id="CHEBI:65315"/>
    </reaction>
</comment>
<comment type="catalytic activity">
    <reaction evidence="5">
        <text>a uridine in tRNA = a pseudouridine in tRNA</text>
        <dbReference type="Rhea" id="RHEA:54572"/>
        <dbReference type="Rhea" id="RHEA-COMP:13339"/>
        <dbReference type="Rhea" id="RHEA-COMP:13934"/>
        <dbReference type="ChEBI" id="CHEBI:65314"/>
        <dbReference type="ChEBI" id="CHEBI:65315"/>
    </reaction>
</comment>
<comment type="catalytic activity">
    <reaction evidence="6">
        <text>uridine(55) in tRNA = pseudouridine(55) in tRNA</text>
        <dbReference type="Rhea" id="RHEA:42532"/>
        <dbReference type="Rhea" id="RHEA-COMP:10101"/>
        <dbReference type="Rhea" id="RHEA-COMP:10102"/>
        <dbReference type="ChEBI" id="CHEBI:65314"/>
        <dbReference type="ChEBI" id="CHEBI:65315"/>
        <dbReference type="EC" id="5.4.99.25"/>
    </reaction>
    <physiologicalReaction direction="left-to-right" evidence="6">
        <dbReference type="Rhea" id="RHEA:42533"/>
    </physiologicalReaction>
</comment>
<comment type="interaction">
    <interactant intactId="EBI-6658513">
        <id>Q8WWH5</id>
    </interactant>
    <interactant intactId="EBI-4291044">
        <id>P40121</id>
        <label>CAPG</label>
    </interactant>
    <organismsDiffer>false</organismsDiffer>
    <experiments>2</experiments>
</comment>
<comment type="subcellular location">
    <subcellularLocation>
        <location evidence="3 6">Nucleus</location>
    </subcellularLocation>
    <subcellularLocation>
        <location evidence="3">Cytoplasm</location>
        <location evidence="3">Cytosol</location>
    </subcellularLocation>
    <text evidence="3">Catalyzes pseudouridylation of mRNAs in the nucleus.</text>
</comment>
<comment type="tissue specificity">
    <text evidence="1">Highly expressed in heart, skeletal muscle and liver. Expressed at lower levels in lung, small intestine, kidney and spleen.</text>
</comment>
<comment type="similarity">
    <text evidence="8">Belongs to the pseudouridine synthase TruB family.</text>
</comment>
<reference key="1">
    <citation type="journal article" date="2003" name="Int. J. Mol. Med.">
        <title>The human TruB family of pseudouridine synthase genes, including the Dyskeratosis Congenita 1 gene and the novel member TRUB1.</title>
        <authorList>
            <person name="Zucchini C."/>
            <person name="Strippoli P."/>
            <person name="Biolchi A."/>
            <person name="Solmi R."/>
            <person name="Lenzi L."/>
            <person name="D'Addabbo P."/>
            <person name="Carinci P."/>
            <person name="Valvassori L."/>
        </authorList>
    </citation>
    <scope>NUCLEOTIDE SEQUENCE [MRNA]</scope>
    <scope>TISSUE SPECIFICITY</scope>
    <source>
        <tissue>Foreskin</tissue>
    </source>
</reference>
<reference key="2">
    <citation type="journal article" date="2007" name="BMC Genomics">
        <title>The full-ORF clone resource of the German cDNA consortium.</title>
        <authorList>
            <person name="Bechtel S."/>
            <person name="Rosenfelder H."/>
            <person name="Duda A."/>
            <person name="Schmidt C.P."/>
            <person name="Ernst U."/>
            <person name="Wellenreuther R."/>
            <person name="Mehrle A."/>
            <person name="Schuster C."/>
            <person name="Bahr A."/>
            <person name="Bloecker H."/>
            <person name="Heubner D."/>
            <person name="Hoerlein A."/>
            <person name="Michel G."/>
            <person name="Wedler H."/>
            <person name="Koehrer K."/>
            <person name="Ottenwaelder B."/>
            <person name="Poustka A."/>
            <person name="Wiemann S."/>
            <person name="Schupp I."/>
        </authorList>
    </citation>
    <scope>NUCLEOTIDE SEQUENCE [LARGE SCALE MRNA]</scope>
    <source>
        <tissue>Endometrial tumor</tissue>
    </source>
</reference>
<reference key="3">
    <citation type="journal article" date="2004" name="Nat. Genet.">
        <title>Complete sequencing and characterization of 21,243 full-length human cDNAs.</title>
        <authorList>
            <person name="Ota T."/>
            <person name="Suzuki Y."/>
            <person name="Nishikawa T."/>
            <person name="Otsuki T."/>
            <person name="Sugiyama T."/>
            <person name="Irie R."/>
            <person name="Wakamatsu A."/>
            <person name="Hayashi K."/>
            <person name="Sato H."/>
            <person name="Nagai K."/>
            <person name="Kimura K."/>
            <person name="Makita H."/>
            <person name="Sekine M."/>
            <person name="Obayashi M."/>
            <person name="Nishi T."/>
            <person name="Shibahara T."/>
            <person name="Tanaka T."/>
            <person name="Ishii S."/>
            <person name="Yamamoto J."/>
            <person name="Saito K."/>
            <person name="Kawai Y."/>
            <person name="Isono Y."/>
            <person name="Nakamura Y."/>
            <person name="Nagahari K."/>
            <person name="Murakami K."/>
            <person name="Yasuda T."/>
            <person name="Iwayanagi T."/>
            <person name="Wagatsuma M."/>
            <person name="Shiratori A."/>
            <person name="Sudo H."/>
            <person name="Hosoiri T."/>
            <person name="Kaku Y."/>
            <person name="Kodaira H."/>
            <person name="Kondo H."/>
            <person name="Sugawara M."/>
            <person name="Takahashi M."/>
            <person name="Kanda K."/>
            <person name="Yokoi T."/>
            <person name="Furuya T."/>
            <person name="Kikkawa E."/>
            <person name="Omura Y."/>
            <person name="Abe K."/>
            <person name="Kamihara K."/>
            <person name="Katsuta N."/>
            <person name="Sato K."/>
            <person name="Tanikawa M."/>
            <person name="Yamazaki M."/>
            <person name="Ninomiya K."/>
            <person name="Ishibashi T."/>
            <person name="Yamashita H."/>
            <person name="Murakawa K."/>
            <person name="Fujimori K."/>
            <person name="Tanai H."/>
            <person name="Kimata M."/>
            <person name="Watanabe M."/>
            <person name="Hiraoka S."/>
            <person name="Chiba Y."/>
            <person name="Ishida S."/>
            <person name="Ono Y."/>
            <person name="Takiguchi S."/>
            <person name="Watanabe S."/>
            <person name="Yosida M."/>
            <person name="Hotuta T."/>
            <person name="Kusano J."/>
            <person name="Kanehori K."/>
            <person name="Takahashi-Fujii A."/>
            <person name="Hara H."/>
            <person name="Tanase T.-O."/>
            <person name="Nomura Y."/>
            <person name="Togiya S."/>
            <person name="Komai F."/>
            <person name="Hara R."/>
            <person name="Takeuchi K."/>
            <person name="Arita M."/>
            <person name="Imose N."/>
            <person name="Musashino K."/>
            <person name="Yuuki H."/>
            <person name="Oshima A."/>
            <person name="Sasaki N."/>
            <person name="Aotsuka S."/>
            <person name="Yoshikawa Y."/>
            <person name="Matsunawa H."/>
            <person name="Ichihara T."/>
            <person name="Shiohata N."/>
            <person name="Sano S."/>
            <person name="Moriya S."/>
            <person name="Momiyama H."/>
            <person name="Satoh N."/>
            <person name="Takami S."/>
            <person name="Terashima Y."/>
            <person name="Suzuki O."/>
            <person name="Nakagawa S."/>
            <person name="Senoh A."/>
            <person name="Mizoguchi H."/>
            <person name="Goto Y."/>
            <person name="Shimizu F."/>
            <person name="Wakebe H."/>
            <person name="Hishigaki H."/>
            <person name="Watanabe T."/>
            <person name="Sugiyama A."/>
            <person name="Takemoto M."/>
            <person name="Kawakami B."/>
            <person name="Yamazaki M."/>
            <person name="Watanabe K."/>
            <person name="Kumagai A."/>
            <person name="Itakura S."/>
            <person name="Fukuzumi Y."/>
            <person name="Fujimori Y."/>
            <person name="Komiyama M."/>
            <person name="Tashiro H."/>
            <person name="Tanigami A."/>
            <person name="Fujiwara T."/>
            <person name="Ono T."/>
            <person name="Yamada K."/>
            <person name="Fujii Y."/>
            <person name="Ozaki K."/>
            <person name="Hirao M."/>
            <person name="Ohmori Y."/>
            <person name="Kawabata A."/>
            <person name="Hikiji T."/>
            <person name="Kobatake N."/>
            <person name="Inagaki H."/>
            <person name="Ikema Y."/>
            <person name="Okamoto S."/>
            <person name="Okitani R."/>
            <person name="Kawakami T."/>
            <person name="Noguchi S."/>
            <person name="Itoh T."/>
            <person name="Shigeta K."/>
            <person name="Senba T."/>
            <person name="Matsumura K."/>
            <person name="Nakajima Y."/>
            <person name="Mizuno T."/>
            <person name="Morinaga M."/>
            <person name="Sasaki M."/>
            <person name="Togashi T."/>
            <person name="Oyama M."/>
            <person name="Hata H."/>
            <person name="Watanabe M."/>
            <person name="Komatsu T."/>
            <person name="Mizushima-Sugano J."/>
            <person name="Satoh T."/>
            <person name="Shirai Y."/>
            <person name="Takahashi Y."/>
            <person name="Nakagawa K."/>
            <person name="Okumura K."/>
            <person name="Nagase T."/>
            <person name="Nomura N."/>
            <person name="Kikuchi H."/>
            <person name="Masuho Y."/>
            <person name="Yamashita R."/>
            <person name="Nakai K."/>
            <person name="Yada T."/>
            <person name="Nakamura Y."/>
            <person name="Ohara O."/>
            <person name="Isogai T."/>
            <person name="Sugano S."/>
        </authorList>
    </citation>
    <scope>NUCLEOTIDE SEQUENCE [LARGE SCALE MRNA]</scope>
    <scope>VARIANT LYS-167</scope>
    <source>
        <tissue>Testis</tissue>
    </source>
</reference>
<reference key="4">
    <citation type="submission" date="2005-04" db="EMBL/GenBank/DDBJ databases">
        <authorList>
            <person name="Totoki Y."/>
            <person name="Toyoda A."/>
            <person name="Takeda T."/>
            <person name="Sakaki Y."/>
            <person name="Tanaka A."/>
            <person name="Yokoyama S."/>
        </authorList>
    </citation>
    <scope>NUCLEOTIDE SEQUENCE [LARGE SCALE MRNA]</scope>
    <source>
        <tissue>Spleen</tissue>
    </source>
</reference>
<reference key="5">
    <citation type="journal article" date="2004" name="Nature">
        <title>The DNA sequence and comparative analysis of human chromosome 10.</title>
        <authorList>
            <person name="Deloukas P."/>
            <person name="Earthrowl M.E."/>
            <person name="Grafham D.V."/>
            <person name="Rubenfield M."/>
            <person name="French L."/>
            <person name="Steward C.A."/>
            <person name="Sims S.K."/>
            <person name="Jones M.C."/>
            <person name="Searle S."/>
            <person name="Scott C."/>
            <person name="Howe K."/>
            <person name="Hunt S.E."/>
            <person name="Andrews T.D."/>
            <person name="Gilbert J.G.R."/>
            <person name="Swarbreck D."/>
            <person name="Ashurst J.L."/>
            <person name="Taylor A."/>
            <person name="Battles J."/>
            <person name="Bird C.P."/>
            <person name="Ainscough R."/>
            <person name="Almeida J.P."/>
            <person name="Ashwell R.I.S."/>
            <person name="Ambrose K.D."/>
            <person name="Babbage A.K."/>
            <person name="Bagguley C.L."/>
            <person name="Bailey J."/>
            <person name="Banerjee R."/>
            <person name="Bates K."/>
            <person name="Beasley H."/>
            <person name="Bray-Allen S."/>
            <person name="Brown A.J."/>
            <person name="Brown J.Y."/>
            <person name="Burford D.C."/>
            <person name="Burrill W."/>
            <person name="Burton J."/>
            <person name="Cahill P."/>
            <person name="Camire D."/>
            <person name="Carter N.P."/>
            <person name="Chapman J.C."/>
            <person name="Clark S.Y."/>
            <person name="Clarke G."/>
            <person name="Clee C.M."/>
            <person name="Clegg S."/>
            <person name="Corby N."/>
            <person name="Coulson A."/>
            <person name="Dhami P."/>
            <person name="Dutta I."/>
            <person name="Dunn M."/>
            <person name="Faulkner L."/>
            <person name="Frankish A."/>
            <person name="Frankland J.A."/>
            <person name="Garner P."/>
            <person name="Garnett J."/>
            <person name="Gribble S."/>
            <person name="Griffiths C."/>
            <person name="Grocock R."/>
            <person name="Gustafson E."/>
            <person name="Hammond S."/>
            <person name="Harley J.L."/>
            <person name="Hart E."/>
            <person name="Heath P.D."/>
            <person name="Ho T.P."/>
            <person name="Hopkins B."/>
            <person name="Horne J."/>
            <person name="Howden P.J."/>
            <person name="Huckle E."/>
            <person name="Hynds C."/>
            <person name="Johnson C."/>
            <person name="Johnson D."/>
            <person name="Kana A."/>
            <person name="Kay M."/>
            <person name="Kimberley A.M."/>
            <person name="Kershaw J.K."/>
            <person name="Kokkinaki M."/>
            <person name="Laird G.K."/>
            <person name="Lawlor S."/>
            <person name="Lee H.M."/>
            <person name="Leongamornlert D.A."/>
            <person name="Laird G."/>
            <person name="Lloyd C."/>
            <person name="Lloyd D.M."/>
            <person name="Loveland J."/>
            <person name="Lovell J."/>
            <person name="McLaren S."/>
            <person name="McLay K.E."/>
            <person name="McMurray A."/>
            <person name="Mashreghi-Mohammadi M."/>
            <person name="Matthews L."/>
            <person name="Milne S."/>
            <person name="Nickerson T."/>
            <person name="Nguyen M."/>
            <person name="Overton-Larty E."/>
            <person name="Palmer S.A."/>
            <person name="Pearce A.V."/>
            <person name="Peck A.I."/>
            <person name="Pelan S."/>
            <person name="Phillimore B."/>
            <person name="Porter K."/>
            <person name="Rice C.M."/>
            <person name="Rogosin A."/>
            <person name="Ross M.T."/>
            <person name="Sarafidou T."/>
            <person name="Sehra H.K."/>
            <person name="Shownkeen R."/>
            <person name="Skuce C.D."/>
            <person name="Smith M."/>
            <person name="Standring L."/>
            <person name="Sycamore N."/>
            <person name="Tester J."/>
            <person name="Thorpe A."/>
            <person name="Torcasso W."/>
            <person name="Tracey A."/>
            <person name="Tromans A."/>
            <person name="Tsolas J."/>
            <person name="Wall M."/>
            <person name="Walsh J."/>
            <person name="Wang H."/>
            <person name="Weinstock K."/>
            <person name="West A.P."/>
            <person name="Willey D.L."/>
            <person name="Whitehead S.L."/>
            <person name="Wilming L."/>
            <person name="Wray P.W."/>
            <person name="Young L."/>
            <person name="Chen Y."/>
            <person name="Lovering R.C."/>
            <person name="Moschonas N.K."/>
            <person name="Siebert R."/>
            <person name="Fechtel K."/>
            <person name="Bentley D."/>
            <person name="Durbin R.M."/>
            <person name="Hubbard T."/>
            <person name="Doucette-Stamm L."/>
            <person name="Beck S."/>
            <person name="Smith D.R."/>
            <person name="Rogers J."/>
        </authorList>
    </citation>
    <scope>NUCLEOTIDE SEQUENCE [LARGE SCALE GENOMIC DNA]</scope>
</reference>
<reference key="6">
    <citation type="journal article" date="2004" name="Genome Res.">
        <title>The status, quality, and expansion of the NIH full-length cDNA project: the Mammalian Gene Collection (MGC).</title>
        <authorList>
            <consortium name="The MGC Project Team"/>
        </authorList>
    </citation>
    <scope>NUCLEOTIDE SEQUENCE [LARGE SCALE MRNA]</scope>
    <source>
        <tissue>Testis</tissue>
    </source>
</reference>
<reference key="7">
    <citation type="journal article" date="2009" name="Anal. Chem.">
        <title>Lys-N and trypsin cover complementary parts of the phosphoproteome in a refined SCX-based approach.</title>
        <authorList>
            <person name="Gauci S."/>
            <person name="Helbig A.O."/>
            <person name="Slijper M."/>
            <person name="Krijgsveld J."/>
            <person name="Heck A.J."/>
            <person name="Mohammed S."/>
        </authorList>
    </citation>
    <scope>ACETYLATION [LARGE SCALE ANALYSIS] AT ALA-2</scope>
    <scope>CLEAVAGE OF INITIATOR METHIONINE [LARGE SCALE ANALYSIS]</scope>
    <scope>IDENTIFICATION BY MASS SPECTROMETRY [LARGE SCALE ANALYSIS]</scope>
</reference>
<reference key="8">
    <citation type="journal article" date="2010" name="Sci. Signal.">
        <title>Quantitative phosphoproteomics reveals widespread full phosphorylation site occupancy during mitosis.</title>
        <authorList>
            <person name="Olsen J.V."/>
            <person name="Vermeulen M."/>
            <person name="Santamaria A."/>
            <person name="Kumar C."/>
            <person name="Miller M.L."/>
            <person name="Jensen L.J."/>
            <person name="Gnad F."/>
            <person name="Cox J."/>
            <person name="Jensen T.S."/>
            <person name="Nigg E.A."/>
            <person name="Brunak S."/>
            <person name="Mann M."/>
        </authorList>
    </citation>
    <scope>ACETYLATION [LARGE SCALE ANALYSIS] AT ALA-2</scope>
    <scope>PHOSPHORYLATION [LARGE SCALE ANALYSIS] AT SER-11</scope>
    <scope>CLEAVAGE OF INITIATOR METHIONINE [LARGE SCALE ANALYSIS]</scope>
    <scope>IDENTIFICATION BY MASS SPECTROMETRY [LARGE SCALE ANALYSIS]</scope>
    <source>
        <tissue>Cervix carcinoma</tissue>
    </source>
</reference>
<reference key="9">
    <citation type="journal article" date="2011" name="BMC Syst. Biol.">
        <title>Initial characterization of the human central proteome.</title>
        <authorList>
            <person name="Burkard T.R."/>
            <person name="Planyavsky M."/>
            <person name="Kaupe I."/>
            <person name="Breitwieser F.P."/>
            <person name="Buerckstuemmer T."/>
            <person name="Bennett K.L."/>
            <person name="Superti-Furga G."/>
            <person name="Colinge J."/>
        </authorList>
    </citation>
    <scope>IDENTIFICATION BY MASS SPECTROMETRY [LARGE SCALE ANALYSIS]</scope>
</reference>
<reference key="10">
    <citation type="journal article" date="2012" name="Mol. Cell. Proteomics">
        <title>Comparative large-scale characterisation of plant vs. mammal proteins reveals similar and idiosyncratic N-alpha acetylation features.</title>
        <authorList>
            <person name="Bienvenut W.V."/>
            <person name="Sumpton D."/>
            <person name="Martinez A."/>
            <person name="Lilla S."/>
            <person name="Espagne C."/>
            <person name="Meinnel T."/>
            <person name="Giglione C."/>
        </authorList>
    </citation>
    <scope>ACETYLATION [LARGE SCALE ANALYSIS] AT ALA-2</scope>
    <scope>CLEAVAGE OF INITIATOR METHIONINE [LARGE SCALE ANALYSIS]</scope>
    <scope>IDENTIFICATION BY MASS SPECTROMETRY [LARGE SCALE ANALYSIS]</scope>
</reference>
<reference key="11">
    <citation type="journal article" date="2013" name="J. Proteome Res.">
        <title>Toward a comprehensive characterization of a human cancer cell phosphoproteome.</title>
        <authorList>
            <person name="Zhou H."/>
            <person name="Di Palma S."/>
            <person name="Preisinger C."/>
            <person name="Peng M."/>
            <person name="Polat A.N."/>
            <person name="Heck A.J."/>
            <person name="Mohammed S."/>
        </authorList>
    </citation>
    <scope>PHOSPHORYLATION [LARGE SCALE ANALYSIS] AT SER-11</scope>
    <scope>IDENTIFICATION BY MASS SPECTROMETRY [LARGE SCALE ANALYSIS]</scope>
    <source>
        <tissue>Cervix carcinoma</tissue>
        <tissue>Erythroleukemia</tissue>
    </source>
</reference>
<reference key="12">
    <citation type="journal article" date="2017" name="Genome Res.">
        <title>TRUB1 is the predominant pseudouridine synthase acting on mammalian mRNA via a predictable and conserved code.</title>
        <authorList>
            <person name="Safra M."/>
            <person name="Nir R."/>
            <person name="Farouq D."/>
            <person name="Vainberg Slutskin I."/>
            <person name="Schwartz S."/>
        </authorList>
    </citation>
    <scope>FUNCTION</scope>
    <scope>CATALYTIC ACTIVITY</scope>
    <scope>SUBCELLULAR LOCATION</scope>
</reference>
<reference key="13">
    <citation type="journal article" date="2019" name="Nat. Chem. Biol.">
        <title>mRNA structure determines modification by pseudouridine synthase 1.</title>
        <authorList>
            <person name="Carlile T.M."/>
            <person name="Martinez N.M."/>
            <person name="Schaening C."/>
            <person name="Su A."/>
            <person name="Bell T.A."/>
            <person name="Zinshteyn B."/>
            <person name="Gilbert W.V."/>
        </authorList>
    </citation>
    <scope>FUNCTION</scope>
    <scope>CATALYTIC ACTIVITY</scope>
</reference>
<reference key="14">
    <citation type="journal article" date="2020" name="EMBO J.">
        <title>The tRNA pseudouridine synthase TruB1 regulates the maturation of let-7 miRNA.</title>
        <authorList>
            <person name="Kurimoto R."/>
            <person name="Chiba T."/>
            <person name="Ito Y."/>
            <person name="Matsushima T."/>
            <person name="Yano Y."/>
            <person name="Miyata K."/>
            <person name="Yashiro Y."/>
            <person name="Suzuki T."/>
            <person name="Tomita K."/>
            <person name="Asahara H."/>
        </authorList>
    </citation>
    <scope>FUNCTION</scope>
    <scope>CATALYTIC ACTIVITY</scope>
    <scope>ACTIVE SITE</scope>
    <scope>MUTAGENESIS OF ASP-121; LYS-147 AND ASP-163</scope>
</reference>
<reference key="15">
    <citation type="journal article" date="2021" name="RNA">
        <title>Mammalian nuclear TRUB1, mitochondrial TRUB2, and cytoplasmic PUS10 produce conserved pseudouridine 55 in different sets of tRNA.</title>
        <authorList>
            <person name="Mukhopadhyay S."/>
            <person name="Deogharia M."/>
            <person name="Gupta R."/>
        </authorList>
    </citation>
    <scope>FUNCTION</scope>
    <scope>CATALYTIC ACTIVITY</scope>
    <scope>SUBCELLULAR LOCATION</scope>
</reference>
<name>TRUB1_HUMAN</name>
<organism>
    <name type="scientific">Homo sapiens</name>
    <name type="common">Human</name>
    <dbReference type="NCBI Taxonomy" id="9606"/>
    <lineage>
        <taxon>Eukaryota</taxon>
        <taxon>Metazoa</taxon>
        <taxon>Chordata</taxon>
        <taxon>Craniata</taxon>
        <taxon>Vertebrata</taxon>
        <taxon>Euteleostomi</taxon>
        <taxon>Mammalia</taxon>
        <taxon>Eutheria</taxon>
        <taxon>Euarchontoglires</taxon>
        <taxon>Primates</taxon>
        <taxon>Haplorrhini</taxon>
        <taxon>Catarrhini</taxon>
        <taxon>Hominidae</taxon>
        <taxon>Homo</taxon>
    </lineage>
</organism>
<feature type="initiator methionine" description="Removed" evidence="12 13 14">
    <location>
        <position position="1"/>
    </location>
</feature>
<feature type="chain" id="PRO_0000252087" description="Pseudouridylate synthase TRUB1">
    <location>
        <begin position="2"/>
        <end position="349"/>
    </location>
</feature>
<feature type="active site" description="Nucleophile" evidence="10">
    <location>
        <position position="121"/>
    </location>
</feature>
<feature type="modified residue" description="N-acetylalanine" evidence="12 13 14">
    <location>
        <position position="2"/>
    </location>
</feature>
<feature type="modified residue" description="Phosphoserine" evidence="13 15">
    <location>
        <position position="11"/>
    </location>
</feature>
<feature type="sequence variant" id="VAR_051607" description="In dbSNP:rs34393297.">
    <original>E</original>
    <variation>A</variation>
    <location>
        <position position="103"/>
    </location>
</feature>
<feature type="sequence variant" id="VAR_027748" description="In dbSNP:rs7099565." evidence="2">
    <original>R</original>
    <variation>K</variation>
    <location>
        <position position="167"/>
    </location>
</feature>
<feature type="mutagenesis site" description="Abolished pseudouridine synthase activity without affecting ability to promote processing of let-7 miRNAs; when associated with A-163." evidence="5">
    <original>D</original>
    <variation>A</variation>
    <location>
        <position position="121"/>
    </location>
</feature>
<feature type="mutagenesis site" description="Abolished RNA-binding and ability to promote processing of let-7 miRNAs." evidence="5">
    <original>K</original>
    <variation>E</variation>
    <location>
        <position position="147"/>
    </location>
</feature>
<feature type="mutagenesis site" description="Abolished pseudouridine synthase activity without affecting ability to promote processing of let-7 miRNAs; when associated with A-121." evidence="5">
    <original>D</original>
    <variation>A</variation>
    <location>
        <position position="163"/>
    </location>
</feature>
<feature type="sequence conflict" description="In Ref. 4; BAD97287." evidence="8" ref="4">
    <original>E</original>
    <variation>D</variation>
    <location>
        <position position="323"/>
    </location>
</feature>
<evidence type="ECO:0000269" key="1">
    <source>
    </source>
</evidence>
<evidence type="ECO:0000269" key="2">
    <source>
    </source>
</evidence>
<evidence type="ECO:0000269" key="3">
    <source>
    </source>
</evidence>
<evidence type="ECO:0000269" key="4">
    <source>
    </source>
</evidence>
<evidence type="ECO:0000269" key="5">
    <source>
    </source>
</evidence>
<evidence type="ECO:0000269" key="6">
    <source>
    </source>
</evidence>
<evidence type="ECO:0000303" key="7">
    <source>
    </source>
</evidence>
<evidence type="ECO:0000305" key="8"/>
<evidence type="ECO:0000305" key="9">
    <source>
    </source>
</evidence>
<evidence type="ECO:0000305" key="10">
    <source>
    </source>
</evidence>
<evidence type="ECO:0000312" key="11">
    <source>
        <dbReference type="HGNC" id="HGNC:16060"/>
    </source>
</evidence>
<evidence type="ECO:0007744" key="12">
    <source>
    </source>
</evidence>
<evidence type="ECO:0007744" key="13">
    <source>
    </source>
</evidence>
<evidence type="ECO:0007744" key="14">
    <source>
    </source>
</evidence>
<evidence type="ECO:0007744" key="15">
    <source>
    </source>
</evidence>
<sequence>MAASEAAVVSSPSLKTDTSPVLETAGTVAAMAATPSARAAAAVVAAAARTGSEARVSKAALATKLLSLSGVFAVHKPKGPTSAELLNRLKEKLLAEAGMPSPEWTKRKKQTLKIGHGGTLDSAARGVLVVGIGSGTKMLTSMLSGSKRYTAIGELGKATDTLDSTGRVTEEKPYDKITQEDIEGILQKFTGNIMQVPPLYSALKKDGQRLSTLMKRGEVVEAKPARPVTVYSISLQKFQPPFFTLDVECGGGFYIRSLVSDIGKELSSCANVLELTRTKQGPFTLEEHALPEDKWTIDDIAQSLEHCSSLFPAELALKKSKPESNEQVLSCEYITLNEPKREDDVIKTC</sequence>
<accession>Q8WWH5</accession>
<accession>B2R716</accession>
<accession>Q53ES2</accession>
<proteinExistence type="evidence at protein level"/>
<keyword id="KW-0002">3D-structure</keyword>
<keyword id="KW-0007">Acetylation</keyword>
<keyword id="KW-0963">Cytoplasm</keyword>
<keyword id="KW-0413">Isomerase</keyword>
<keyword id="KW-0507">mRNA processing</keyword>
<keyword id="KW-0539">Nucleus</keyword>
<keyword id="KW-0597">Phosphoprotein</keyword>
<keyword id="KW-1267">Proteomics identification</keyword>
<keyword id="KW-1185">Reference proteome</keyword>
<keyword id="KW-0819">tRNA processing</keyword>